<reference key="1">
    <citation type="journal article" date="2007" name="J. Bacteriol.">
        <title>Genome sequence and analysis of the soil cellulolytic actinomycete Thermobifida fusca YX.</title>
        <authorList>
            <person name="Lykidis A."/>
            <person name="Mavromatis K."/>
            <person name="Ivanova N."/>
            <person name="Anderson I."/>
            <person name="Land M."/>
            <person name="DiBartolo G."/>
            <person name="Martinez M."/>
            <person name="Lapidus A."/>
            <person name="Lucas S."/>
            <person name="Copeland A."/>
            <person name="Richardson P."/>
            <person name="Wilson D.B."/>
            <person name="Kyrpides N."/>
        </authorList>
    </citation>
    <scope>NUCLEOTIDE SEQUENCE [LARGE SCALE GENOMIC DNA]</scope>
    <source>
        <strain>YX</strain>
    </source>
</reference>
<accession>Q47MW1</accession>
<name>PROA_THEFY</name>
<protein>
    <recommendedName>
        <fullName evidence="1">Gamma-glutamyl phosphate reductase</fullName>
        <shortName evidence="1">GPR</shortName>
        <ecNumber evidence="1">1.2.1.41</ecNumber>
    </recommendedName>
    <alternativeName>
        <fullName evidence="1">Glutamate-5-semialdehyde dehydrogenase</fullName>
    </alternativeName>
    <alternativeName>
        <fullName evidence="1">Glutamyl-gamma-semialdehyde dehydrogenase</fullName>
        <shortName evidence="1">GSA dehydrogenase</shortName>
    </alternativeName>
</protein>
<comment type="function">
    <text evidence="1">Catalyzes the NADPH-dependent reduction of L-glutamate 5-phosphate into L-glutamate 5-semialdehyde and phosphate. The product spontaneously undergoes cyclization to form 1-pyrroline-5-carboxylate.</text>
</comment>
<comment type="catalytic activity">
    <reaction evidence="1">
        <text>L-glutamate 5-semialdehyde + phosphate + NADP(+) = L-glutamyl 5-phosphate + NADPH + H(+)</text>
        <dbReference type="Rhea" id="RHEA:19541"/>
        <dbReference type="ChEBI" id="CHEBI:15378"/>
        <dbReference type="ChEBI" id="CHEBI:43474"/>
        <dbReference type="ChEBI" id="CHEBI:57783"/>
        <dbReference type="ChEBI" id="CHEBI:58066"/>
        <dbReference type="ChEBI" id="CHEBI:58274"/>
        <dbReference type="ChEBI" id="CHEBI:58349"/>
        <dbReference type="EC" id="1.2.1.41"/>
    </reaction>
</comment>
<comment type="pathway">
    <text evidence="1">Amino-acid biosynthesis; L-proline biosynthesis; L-glutamate 5-semialdehyde from L-glutamate: step 2/2.</text>
</comment>
<comment type="subcellular location">
    <subcellularLocation>
        <location evidence="1">Cytoplasm</location>
    </subcellularLocation>
</comment>
<comment type="similarity">
    <text evidence="1">Belongs to the gamma-glutamyl phosphate reductase family.</text>
</comment>
<comment type="sequence caution" evidence="2">
    <conflict type="erroneous initiation">
        <sequence resource="EMBL-CDS" id="AAZ56208"/>
    </conflict>
</comment>
<sequence length="418" mass="44566">MTDIERDVRKVAERARDAAADLAPLSRDAKDEALTAVADALRERTEEIVAANAKDVAQARENGISEAMIDRLTLTPARITAIADAVHEIVELPDPVGEVVRGKTLPNGLELRQIRVPLGVIGIIYEGRPNVTVDAAALCLKSGNAVLLRGSSSAYSSNTVLTDVIRQALASTRVPVDAVQMVPGKSRESVKHLMRARGLVDVLIPRGGASLIQTVVNESTIPVIETGTGNCHVYVDEAADLDQALKIVLNSKTQRCSVCNASETLLVHAGIADAFLPRALAELREAGVTIHGDERVRSYDSSVVPATEEDWATEYLSLDLAVRVVDSLDEAVAHIRAYSSAHTEAIITDSQAAARRFVSLVDSAAVMVNASTRFTDGGEFGFGAEIGISTQKLHARGPMGLPELTTTKYVVTGEGHVR</sequence>
<evidence type="ECO:0000255" key="1">
    <source>
        <dbReference type="HAMAP-Rule" id="MF_00412"/>
    </source>
</evidence>
<evidence type="ECO:0000305" key="2"/>
<organism>
    <name type="scientific">Thermobifida fusca (strain YX)</name>
    <dbReference type="NCBI Taxonomy" id="269800"/>
    <lineage>
        <taxon>Bacteria</taxon>
        <taxon>Bacillati</taxon>
        <taxon>Actinomycetota</taxon>
        <taxon>Actinomycetes</taxon>
        <taxon>Streptosporangiales</taxon>
        <taxon>Nocardiopsidaceae</taxon>
        <taxon>Thermobifida</taxon>
    </lineage>
</organism>
<proteinExistence type="inferred from homology"/>
<keyword id="KW-0028">Amino-acid biosynthesis</keyword>
<keyword id="KW-0963">Cytoplasm</keyword>
<keyword id="KW-0521">NADP</keyword>
<keyword id="KW-0560">Oxidoreductase</keyword>
<keyword id="KW-0641">Proline biosynthesis</keyword>
<dbReference type="EC" id="1.2.1.41" evidence="1"/>
<dbReference type="EMBL" id="CP000088">
    <property type="protein sequence ID" value="AAZ56208.1"/>
    <property type="status" value="ALT_INIT"/>
    <property type="molecule type" value="Genomic_DNA"/>
</dbReference>
<dbReference type="RefSeq" id="WP_011292598.1">
    <property type="nucleotide sequence ID" value="NC_007333.1"/>
</dbReference>
<dbReference type="SMR" id="Q47MW1"/>
<dbReference type="STRING" id="269800.Tfu_2175"/>
<dbReference type="KEGG" id="tfu:Tfu_2175"/>
<dbReference type="eggNOG" id="COG0014">
    <property type="taxonomic scope" value="Bacteria"/>
</dbReference>
<dbReference type="HOGENOM" id="CLU_030231_0_0_11"/>
<dbReference type="OrthoDB" id="9809970at2"/>
<dbReference type="UniPathway" id="UPA00098">
    <property type="reaction ID" value="UER00360"/>
</dbReference>
<dbReference type="GO" id="GO:0005737">
    <property type="term" value="C:cytoplasm"/>
    <property type="evidence" value="ECO:0007669"/>
    <property type="project" value="UniProtKB-SubCell"/>
</dbReference>
<dbReference type="GO" id="GO:0004350">
    <property type="term" value="F:glutamate-5-semialdehyde dehydrogenase activity"/>
    <property type="evidence" value="ECO:0007669"/>
    <property type="project" value="UniProtKB-UniRule"/>
</dbReference>
<dbReference type="GO" id="GO:0050661">
    <property type="term" value="F:NADP binding"/>
    <property type="evidence" value="ECO:0007669"/>
    <property type="project" value="InterPro"/>
</dbReference>
<dbReference type="GO" id="GO:0055129">
    <property type="term" value="P:L-proline biosynthetic process"/>
    <property type="evidence" value="ECO:0007669"/>
    <property type="project" value="UniProtKB-UniRule"/>
</dbReference>
<dbReference type="CDD" id="cd07079">
    <property type="entry name" value="ALDH_F18-19_ProA-GPR"/>
    <property type="match status" value="1"/>
</dbReference>
<dbReference type="FunFam" id="3.40.309.10:FF:000006">
    <property type="entry name" value="Gamma-glutamyl phosphate reductase"/>
    <property type="match status" value="1"/>
</dbReference>
<dbReference type="Gene3D" id="3.40.605.10">
    <property type="entry name" value="Aldehyde Dehydrogenase, Chain A, domain 1"/>
    <property type="match status" value="1"/>
</dbReference>
<dbReference type="Gene3D" id="3.40.309.10">
    <property type="entry name" value="Aldehyde Dehydrogenase, Chain A, domain 2"/>
    <property type="match status" value="1"/>
</dbReference>
<dbReference type="HAMAP" id="MF_00412">
    <property type="entry name" value="ProA"/>
    <property type="match status" value="1"/>
</dbReference>
<dbReference type="InterPro" id="IPR016161">
    <property type="entry name" value="Ald_DH/histidinol_DH"/>
</dbReference>
<dbReference type="InterPro" id="IPR016163">
    <property type="entry name" value="Ald_DH_C"/>
</dbReference>
<dbReference type="InterPro" id="IPR016162">
    <property type="entry name" value="Ald_DH_N"/>
</dbReference>
<dbReference type="InterPro" id="IPR015590">
    <property type="entry name" value="Aldehyde_DH_dom"/>
</dbReference>
<dbReference type="InterPro" id="IPR020593">
    <property type="entry name" value="G-glutamylP_reductase_CS"/>
</dbReference>
<dbReference type="InterPro" id="IPR012134">
    <property type="entry name" value="Glu-5-SA_DH"/>
</dbReference>
<dbReference type="InterPro" id="IPR000965">
    <property type="entry name" value="GPR_dom"/>
</dbReference>
<dbReference type="NCBIfam" id="NF001221">
    <property type="entry name" value="PRK00197.1"/>
    <property type="match status" value="1"/>
</dbReference>
<dbReference type="NCBIfam" id="TIGR00407">
    <property type="entry name" value="proA"/>
    <property type="match status" value="1"/>
</dbReference>
<dbReference type="PANTHER" id="PTHR11063:SF8">
    <property type="entry name" value="DELTA-1-PYRROLINE-5-CARBOXYLATE SYNTHASE"/>
    <property type="match status" value="1"/>
</dbReference>
<dbReference type="PANTHER" id="PTHR11063">
    <property type="entry name" value="GLUTAMATE SEMIALDEHYDE DEHYDROGENASE"/>
    <property type="match status" value="1"/>
</dbReference>
<dbReference type="Pfam" id="PF00171">
    <property type="entry name" value="Aldedh"/>
    <property type="match status" value="1"/>
</dbReference>
<dbReference type="PIRSF" id="PIRSF000151">
    <property type="entry name" value="GPR"/>
    <property type="match status" value="1"/>
</dbReference>
<dbReference type="SUPFAM" id="SSF53720">
    <property type="entry name" value="ALDH-like"/>
    <property type="match status" value="1"/>
</dbReference>
<dbReference type="PROSITE" id="PS01223">
    <property type="entry name" value="PROA"/>
    <property type="match status" value="1"/>
</dbReference>
<feature type="chain" id="PRO_0000230027" description="Gamma-glutamyl phosphate reductase">
    <location>
        <begin position="1"/>
        <end position="418"/>
    </location>
</feature>
<gene>
    <name evidence="1" type="primary">proA</name>
    <name type="ordered locus">Tfu_2175</name>
</gene>